<keyword id="KW-1185">Reference proteome</keyword>
<keyword id="KW-0687">Ribonucleoprotein</keyword>
<keyword id="KW-0689">Ribosomal protein</keyword>
<keyword id="KW-0694">RNA-binding</keyword>
<keyword id="KW-0699">rRNA-binding</keyword>
<reference key="1">
    <citation type="journal article" date="2002" name="Genome Res.">
        <title>A complete sequence of the T. tengcongensis genome.</title>
        <authorList>
            <person name="Bao Q."/>
            <person name="Tian Y."/>
            <person name="Li W."/>
            <person name="Xu Z."/>
            <person name="Xuan Z."/>
            <person name="Hu S."/>
            <person name="Dong W."/>
            <person name="Yang J."/>
            <person name="Chen Y."/>
            <person name="Xue Y."/>
            <person name="Xu Y."/>
            <person name="Lai X."/>
            <person name="Huang L."/>
            <person name="Dong X."/>
            <person name="Ma Y."/>
            <person name="Ling L."/>
            <person name="Tan H."/>
            <person name="Chen R."/>
            <person name="Wang J."/>
            <person name="Yu J."/>
            <person name="Yang H."/>
        </authorList>
    </citation>
    <scope>NUCLEOTIDE SEQUENCE [LARGE SCALE GENOMIC DNA]</scope>
    <source>
        <strain>DSM 15242 / JCM 11007 / NBRC 100824 / MB4</strain>
    </source>
</reference>
<name>RS17_CALS4</name>
<proteinExistence type="inferred from homology"/>
<gene>
    <name evidence="1" type="primary">rpsQ</name>
    <name type="ordered locus">TTE2283</name>
</gene>
<organism>
    <name type="scientific">Caldanaerobacter subterraneus subsp. tengcongensis (strain DSM 15242 / JCM 11007 / NBRC 100824 / MB4)</name>
    <name type="common">Thermoanaerobacter tengcongensis</name>
    <dbReference type="NCBI Taxonomy" id="273068"/>
    <lineage>
        <taxon>Bacteria</taxon>
        <taxon>Bacillati</taxon>
        <taxon>Bacillota</taxon>
        <taxon>Clostridia</taxon>
        <taxon>Thermoanaerobacterales</taxon>
        <taxon>Thermoanaerobacteraceae</taxon>
        <taxon>Caldanaerobacter</taxon>
    </lineage>
</organism>
<dbReference type="EMBL" id="AE008691">
    <property type="protein sequence ID" value="AAM25426.1"/>
    <property type="molecule type" value="Genomic_DNA"/>
</dbReference>
<dbReference type="RefSeq" id="WP_011026329.1">
    <property type="nucleotide sequence ID" value="NZ_JANUCV010000001.1"/>
</dbReference>
<dbReference type="SMR" id="Q8R7W3"/>
<dbReference type="STRING" id="273068.TTE2283"/>
<dbReference type="KEGG" id="tte:TTE2283"/>
<dbReference type="eggNOG" id="COG0186">
    <property type="taxonomic scope" value="Bacteria"/>
</dbReference>
<dbReference type="HOGENOM" id="CLU_073626_1_0_9"/>
<dbReference type="OrthoDB" id="9811714at2"/>
<dbReference type="Proteomes" id="UP000000555">
    <property type="component" value="Chromosome"/>
</dbReference>
<dbReference type="GO" id="GO:0022627">
    <property type="term" value="C:cytosolic small ribosomal subunit"/>
    <property type="evidence" value="ECO:0007669"/>
    <property type="project" value="TreeGrafter"/>
</dbReference>
<dbReference type="GO" id="GO:0019843">
    <property type="term" value="F:rRNA binding"/>
    <property type="evidence" value="ECO:0007669"/>
    <property type="project" value="UniProtKB-UniRule"/>
</dbReference>
<dbReference type="GO" id="GO:0003735">
    <property type="term" value="F:structural constituent of ribosome"/>
    <property type="evidence" value="ECO:0007669"/>
    <property type="project" value="InterPro"/>
</dbReference>
<dbReference type="GO" id="GO:0006412">
    <property type="term" value="P:translation"/>
    <property type="evidence" value="ECO:0007669"/>
    <property type="project" value="UniProtKB-UniRule"/>
</dbReference>
<dbReference type="CDD" id="cd00364">
    <property type="entry name" value="Ribosomal_uS17"/>
    <property type="match status" value="1"/>
</dbReference>
<dbReference type="FunFam" id="2.40.50.140:FF:000026">
    <property type="entry name" value="30S ribosomal protein S17"/>
    <property type="match status" value="1"/>
</dbReference>
<dbReference type="Gene3D" id="2.40.50.140">
    <property type="entry name" value="Nucleic acid-binding proteins"/>
    <property type="match status" value="1"/>
</dbReference>
<dbReference type="HAMAP" id="MF_01345_B">
    <property type="entry name" value="Ribosomal_uS17_B"/>
    <property type="match status" value="1"/>
</dbReference>
<dbReference type="InterPro" id="IPR012340">
    <property type="entry name" value="NA-bd_OB-fold"/>
</dbReference>
<dbReference type="InterPro" id="IPR000266">
    <property type="entry name" value="Ribosomal_uS17"/>
</dbReference>
<dbReference type="InterPro" id="IPR019984">
    <property type="entry name" value="Ribosomal_uS17_bact/chlr"/>
</dbReference>
<dbReference type="InterPro" id="IPR019979">
    <property type="entry name" value="Ribosomal_uS17_CS"/>
</dbReference>
<dbReference type="NCBIfam" id="NF004123">
    <property type="entry name" value="PRK05610.1"/>
    <property type="match status" value="1"/>
</dbReference>
<dbReference type="NCBIfam" id="TIGR03635">
    <property type="entry name" value="uS17_bact"/>
    <property type="match status" value="1"/>
</dbReference>
<dbReference type="PANTHER" id="PTHR10744">
    <property type="entry name" value="40S RIBOSOMAL PROTEIN S11 FAMILY MEMBER"/>
    <property type="match status" value="1"/>
</dbReference>
<dbReference type="PANTHER" id="PTHR10744:SF1">
    <property type="entry name" value="SMALL RIBOSOMAL SUBUNIT PROTEIN US17M"/>
    <property type="match status" value="1"/>
</dbReference>
<dbReference type="Pfam" id="PF00366">
    <property type="entry name" value="Ribosomal_S17"/>
    <property type="match status" value="1"/>
</dbReference>
<dbReference type="PRINTS" id="PR00973">
    <property type="entry name" value="RIBOSOMALS17"/>
</dbReference>
<dbReference type="SUPFAM" id="SSF50249">
    <property type="entry name" value="Nucleic acid-binding proteins"/>
    <property type="match status" value="1"/>
</dbReference>
<dbReference type="PROSITE" id="PS00056">
    <property type="entry name" value="RIBOSOMAL_S17"/>
    <property type="match status" value="1"/>
</dbReference>
<protein>
    <recommendedName>
        <fullName evidence="1">Small ribosomal subunit protein uS17</fullName>
    </recommendedName>
    <alternativeName>
        <fullName evidence="2">30S ribosomal protein S17</fullName>
    </alternativeName>
</protein>
<evidence type="ECO:0000255" key="1">
    <source>
        <dbReference type="HAMAP-Rule" id="MF_01345"/>
    </source>
</evidence>
<evidence type="ECO:0000305" key="2"/>
<sequence>MERGQRKVRIGTVVSNKMQKTIVVAVEDKFRHPLYGKIVKRTKKYKVHDENNICNVGDVVKIMETRPLSKEKRWRLVEVIKKAE</sequence>
<feature type="chain" id="PRO_0000233594" description="Small ribosomal subunit protein uS17">
    <location>
        <begin position="1"/>
        <end position="84"/>
    </location>
</feature>
<accession>Q8R7W3</accession>
<comment type="function">
    <text evidence="1">One of the primary rRNA binding proteins, it binds specifically to the 5'-end of 16S ribosomal RNA.</text>
</comment>
<comment type="subunit">
    <text evidence="1">Part of the 30S ribosomal subunit.</text>
</comment>
<comment type="similarity">
    <text evidence="1">Belongs to the universal ribosomal protein uS17 family.</text>
</comment>